<feature type="signal peptide" evidence="1">
    <location>
        <begin position="1"/>
        <end position="18"/>
    </location>
</feature>
<feature type="propeptide" id="PRO_0000035529" evidence="5">
    <location>
        <begin position="19"/>
        <end position="60"/>
    </location>
</feature>
<feature type="peptide" id="PRO_0000035530" description="Delta-hexatoxin-Mg1a" evidence="5">
    <location>
        <begin position="63"/>
        <end position="105"/>
    </location>
</feature>
<feature type="disulfide bond" evidence="3 6">
    <location>
        <begin position="63"/>
        <end position="77"/>
    </location>
</feature>
<feature type="disulfide bond" evidence="3 6">
    <location>
        <begin position="70"/>
        <end position="82"/>
    </location>
</feature>
<feature type="disulfide bond" evidence="3 6">
    <location>
        <begin position="76"/>
        <end position="93"/>
    </location>
</feature>
<feature type="disulfide bond" evidence="3 6">
    <location>
        <begin position="78"/>
        <end position="105"/>
    </location>
</feature>
<feature type="strand" evidence="7">
    <location>
        <begin position="66"/>
        <end position="69"/>
    </location>
</feature>
<feature type="helix" evidence="7">
    <location>
        <begin position="73"/>
        <end position="75"/>
    </location>
</feature>
<feature type="strand" evidence="7">
    <location>
        <begin position="81"/>
        <end position="84"/>
    </location>
</feature>
<feature type="helix" evidence="7">
    <location>
        <begin position="86"/>
        <end position="88"/>
    </location>
</feature>
<feature type="strand" evidence="7">
    <location>
        <begin position="89"/>
        <end position="94"/>
    </location>
</feature>
<feature type="strand" evidence="7">
    <location>
        <begin position="100"/>
        <end position="102"/>
    </location>
</feature>
<name>TXMG4_MACGS</name>
<reference key="1">
    <citation type="journal article" date="2003" name="FEBS Lett.">
        <title>Distinct primary structures of the major peptide toxins from the venom of the spider Macrothele gigas that bind to sites 3 and 4 in the sodium channel.</title>
        <authorList>
            <person name="Corzo G."/>
            <person name="Gilles N."/>
            <person name="Satake H."/>
            <person name="Villegas E."/>
            <person name="Dai L."/>
            <person name="Nakajima T."/>
            <person name="Haupt J."/>
        </authorList>
    </citation>
    <scope>NUCLEOTIDE SEQUENCE [MRNA]</scope>
    <scope>PROTEIN SEQUENCE OF 63-85</scope>
    <scope>FUNCTION</scope>
    <scope>SUBCELLULAR LOCATION</scope>
    <scope>TISSUE SPECIFICITY</scope>
    <scope>TOXIC DOSE</scope>
    <scope>MASS SPECTROMETRY</scope>
    <source>
        <tissue>Venom</tissue>
    </source>
</reference>
<reference key="2">
    <citation type="journal article" date="2009" name="J. Biol. Chem.">
        <title>Synthesis, solution structure, and phylum selectivity of a spider {delta}-toxin that slows inactivation of specific voltage-gated sodium channel subtypes.</title>
        <authorList>
            <person name="Yamaji N."/>
            <person name="Little M.J."/>
            <person name="Nishio H."/>
            <person name="Billen B."/>
            <person name="Villegas E."/>
            <person name="Nishiuchi Y."/>
            <person name="Tytgat J."/>
            <person name="Nicholson G.M."/>
            <person name="Corzo G."/>
        </authorList>
    </citation>
    <scope>STRUCTURE BY NMR OF 63-105</scope>
    <scope>FUNCTION</scope>
    <scope>SYNTHESIS OF 63-105</scope>
    <scope>DISULFIDE BONDS</scope>
</reference>
<organism evidence="4">
    <name type="scientific">Macrothele gigas</name>
    <name type="common">Japanese funnel web spider</name>
    <dbReference type="NCBI Taxonomy" id="223896"/>
    <lineage>
        <taxon>Eukaryota</taxon>
        <taxon>Metazoa</taxon>
        <taxon>Ecdysozoa</taxon>
        <taxon>Arthropoda</taxon>
        <taxon>Chelicerata</taxon>
        <taxon>Arachnida</taxon>
        <taxon>Araneae</taxon>
        <taxon>Mygalomorphae</taxon>
        <taxon>Macrothelidae</taxon>
        <taxon>Macrothele</taxon>
    </lineage>
</organism>
<dbReference type="EMBL" id="AB105149">
    <property type="protein sequence ID" value="BAC80149.1"/>
    <property type="molecule type" value="mRNA"/>
</dbReference>
<dbReference type="PDB" id="2ROO">
    <property type="method" value="NMR"/>
    <property type="chains" value="A=63-105"/>
</dbReference>
<dbReference type="PDBsum" id="2ROO"/>
<dbReference type="BMRB" id="P83560"/>
<dbReference type="SMR" id="P83560"/>
<dbReference type="TCDB" id="8.B.6.2.2">
    <property type="family name" value="the ca(2+) channel-targeting spider toxin (cst) family"/>
</dbReference>
<dbReference type="ArachnoServer" id="AS000382">
    <property type="toxin name" value="delta-hexatoxin-Mg1a"/>
</dbReference>
<dbReference type="EvolutionaryTrace" id="P83560"/>
<dbReference type="GO" id="GO:0005576">
    <property type="term" value="C:extracellular region"/>
    <property type="evidence" value="ECO:0007669"/>
    <property type="project" value="UniProtKB-SubCell"/>
</dbReference>
<dbReference type="GO" id="GO:0019871">
    <property type="term" value="F:sodium channel inhibitor activity"/>
    <property type="evidence" value="ECO:0007669"/>
    <property type="project" value="InterPro"/>
</dbReference>
<dbReference type="GO" id="GO:0090729">
    <property type="term" value="F:toxin activity"/>
    <property type="evidence" value="ECO:0007669"/>
    <property type="project" value="UniProtKB-KW"/>
</dbReference>
<dbReference type="Gene3D" id="4.10.40.10">
    <property type="match status" value="1"/>
</dbReference>
<dbReference type="InterPro" id="IPR008017">
    <property type="entry name" value="Delta-hexatoxin"/>
</dbReference>
<dbReference type="Pfam" id="PF05353">
    <property type="entry name" value="Atracotoxin"/>
    <property type="match status" value="1"/>
</dbReference>
<dbReference type="SUPFAM" id="SSF57059">
    <property type="entry name" value="omega toxin-like"/>
    <property type="match status" value="1"/>
</dbReference>
<dbReference type="PROSITE" id="PS60018">
    <property type="entry name" value="DELTA_ACTX"/>
    <property type="match status" value="1"/>
</dbReference>
<proteinExistence type="evidence at protein level"/>
<comment type="function">
    <text evidence="2 3">Selectively slows channel inactivation of mammalian Nav1.1/SCN1A, Nav1.3/SCN3A, and Nav1.6/SCN8A and shows higher affinity for insect Nav1/para channels (site 3). Induces tonic repetitive firing of nerve impulses in insect neurons accompanied by plateau potentials.</text>
</comment>
<comment type="subcellular location">
    <subcellularLocation>
        <location evidence="2">Secreted</location>
    </subcellularLocation>
</comment>
<comment type="tissue specificity">
    <text evidence="5">Expressed by the venom gland.</text>
</comment>
<comment type="domain">
    <text evidence="4">The presence of a 'disulfide through disulfide knot' structurally defines this protein as a knottin.</text>
</comment>
<comment type="mass spectrometry"/>
<comment type="toxic dose">
    <text evidence="2">LD(50) 0.15 pmol/g by intracranial injection into mice.</text>
</comment>
<comment type="toxic dose">
    <text evidence="2">LD(50) is 1.2 nmol/kg in lepidopteran larvae.</text>
</comment>
<comment type="similarity">
    <text evidence="4">Belongs to the neurotoxin 06 (delta-actx) family.</text>
</comment>
<protein>
    <recommendedName>
        <fullName>Delta-hexatoxin-Mg1a</fullName>
        <shortName>Delta-HXTX-Mg1a</shortName>
    </recommendedName>
    <alternativeName>
        <fullName>Neurotoxin magi-4</fullName>
    </alternativeName>
</protein>
<evidence type="ECO:0000255" key="1"/>
<evidence type="ECO:0000269" key="2">
    <source>
    </source>
</evidence>
<evidence type="ECO:0000269" key="3">
    <source>
    </source>
</evidence>
<evidence type="ECO:0000305" key="4"/>
<evidence type="ECO:0000305" key="5">
    <source>
    </source>
</evidence>
<evidence type="ECO:0007744" key="6">
    <source>
        <dbReference type="PDB" id="2ROO"/>
    </source>
</evidence>
<evidence type="ECO:0007829" key="7">
    <source>
        <dbReference type="PDB" id="2ROO"/>
    </source>
</evidence>
<accession>P83560</accession>
<keyword id="KW-0002">3D-structure</keyword>
<keyword id="KW-0165">Cleavage on pair of basic residues</keyword>
<keyword id="KW-0903">Direct protein sequencing</keyword>
<keyword id="KW-1015">Disulfide bond</keyword>
<keyword id="KW-0872">Ion channel impairing toxin</keyword>
<keyword id="KW-0960">Knottin</keyword>
<keyword id="KW-0528">Neurotoxin</keyword>
<keyword id="KW-0964">Secreted</keyword>
<keyword id="KW-0732">Signal</keyword>
<keyword id="KW-0800">Toxin</keyword>
<keyword id="KW-0738">Voltage-gated sodium channel impairing toxin</keyword>
<sequence>MKTLVIACVALVLVVVHGEVIEEVNEKQLQESVEEKYSLLQRLEKLDEAITAEENRNSRVRRCGSKRAWCKEKKDCCCGYNCVYAWYNQQSSCERKWKYLFTGEC</sequence>